<comment type="function">
    <text evidence="1 2 3">May act as a substrate-specific adapter of an E3 ubiquitin-protein ligase complex (CUL3-RBX1-BTB) which mediates the ubiquitination and subsequent proteasomal degradation of target proteins (By similarity). Transcriptional co-regulator involved in the promotion of leaf and floral meristem fate and determinacy (By similarity). Required for the abscission of senescent organs, probably by regulating the cell wall disorganization in abscission zones (AZs, e.g. pulvini at the base of leaves) (By similarity).</text>
</comment>
<comment type="pathway">
    <text evidence="1">Protein modification; protein ubiquitination.</text>
</comment>
<comment type="subunit">
    <text evidence="4 10">Homodimer (By similarity). Interacts with TGAL5, TGAL7, TGAL8 and TGAL9 (PubMed:24919709).</text>
</comment>
<comment type="subcellular location">
    <subcellularLocation>
        <location evidence="5">Nucleus</location>
    </subcellularLocation>
    <subcellularLocation>
        <location evidence="5">Cytoplasm</location>
    </subcellularLocation>
</comment>
<comment type="domain">
    <text evidence="1">The BTB/POZ domain mediates the interaction with some component of ubiquitin ligase complexes.</text>
</comment>
<comment type="similarity">
    <text evidence="12">Belongs to the plant 'ANKYRIN-BTB/POZ' family. 'NOOT-BOP-COCH-like' (NBCL) subfamily.</text>
</comment>
<reference key="1">
    <citation type="submission" date="2010-07" db="EMBL/GenBank/DDBJ databases">
        <title>Oryza sativa japonica group cultivar Dongjin putative NPR1-like protein 5 (NPR5) mRNA.</title>
        <authorList>
            <person name="Moon S.-J."/>
            <person name="Shin D."/>
            <person name="Kim B.-G."/>
            <person name="Park S.R."/>
            <person name="Byun M.-O."/>
        </authorList>
    </citation>
    <scope>NUCLEOTIDE SEQUENCE [MRNA]</scope>
    <source>
        <strain>cv. Dongjin</strain>
    </source>
</reference>
<reference key="2">
    <citation type="journal article" date="2005" name="BMC Biol.">
        <title>The sequence of rice chromosomes 11 and 12, rich in disease resistance genes and recent gene duplications.</title>
        <authorList>
            <consortium name="The rice chromosomes 11 and 12 sequencing consortia"/>
        </authorList>
    </citation>
    <scope>NUCLEOTIDE SEQUENCE [LARGE SCALE GENOMIC DNA]</scope>
    <source>
        <strain>cv. Nipponbare</strain>
    </source>
</reference>
<reference key="3">
    <citation type="journal article" date="2005" name="Nature">
        <title>The map-based sequence of the rice genome.</title>
        <authorList>
            <consortium name="International rice genome sequencing project (IRGSP)"/>
        </authorList>
    </citation>
    <scope>NUCLEOTIDE SEQUENCE [LARGE SCALE GENOMIC DNA]</scope>
    <source>
        <strain>cv. Nipponbare</strain>
    </source>
</reference>
<reference key="4">
    <citation type="journal article" date="2008" name="Nucleic Acids Res.">
        <title>The rice annotation project database (RAP-DB): 2008 update.</title>
        <authorList>
            <consortium name="The rice annotation project (RAP)"/>
        </authorList>
    </citation>
    <scope>GENOME REANNOTATION</scope>
    <source>
        <strain>cv. Nipponbare</strain>
    </source>
</reference>
<reference key="5">
    <citation type="journal article" date="2013" name="Rice">
        <title>Improvement of the Oryza sativa Nipponbare reference genome using next generation sequence and optical map data.</title>
        <authorList>
            <person name="Kawahara Y."/>
            <person name="de la Bastide M."/>
            <person name="Hamilton J.P."/>
            <person name="Kanamori H."/>
            <person name="McCombie W.R."/>
            <person name="Ouyang S."/>
            <person name="Schwartz D.C."/>
            <person name="Tanaka T."/>
            <person name="Wu J."/>
            <person name="Zhou S."/>
            <person name="Childs K.L."/>
            <person name="Davidson R.M."/>
            <person name="Lin H."/>
            <person name="Quesada-Ocampo L."/>
            <person name="Vaillancourt B."/>
            <person name="Sakai H."/>
            <person name="Lee S.S."/>
            <person name="Kim J."/>
            <person name="Numa H."/>
            <person name="Itoh T."/>
            <person name="Buell C.R."/>
            <person name="Matsumoto T."/>
        </authorList>
    </citation>
    <scope>GENOME REANNOTATION</scope>
    <source>
        <strain>cv. Nipponbare</strain>
    </source>
</reference>
<reference key="6">
    <citation type="journal article" date="2014" name="BMC Genomics">
        <title>Interaction specificity and coexpression of rice NPR1 homologs 1 and 3 (NH1 and NH3), TGA transcription factors and negative regulator of resistance (NRR) proteins.</title>
        <authorList>
            <person name="Chern M."/>
            <person name="Bai W."/>
            <person name="Ruan D."/>
            <person name="Oh T."/>
            <person name="Chen X."/>
            <person name="Ronald P.C."/>
        </authorList>
    </citation>
    <scope>INTERACTION WITH TGAL5; TGAL7; TGAL8 AND TGAL9</scope>
</reference>
<name>NH51_ORYSJ</name>
<feature type="chain" id="PRO_0000437004" description="BTB/POZ domain and ankyrin repeat-containing protein NH5.1">
    <location>
        <begin position="1"/>
        <end position="494"/>
    </location>
</feature>
<feature type="domain" description="BTB" evidence="7">
    <location>
        <begin position="25"/>
        <end position="130"/>
    </location>
</feature>
<feature type="repeat" description="ANK 1" evidence="6">
    <location>
        <begin position="274"/>
        <end position="302"/>
    </location>
</feature>
<feature type="repeat" description="ANK 2" evidence="6">
    <location>
        <begin position="303"/>
        <end position="333"/>
    </location>
</feature>
<feature type="repeat" description="ANK 3" evidence="6">
    <location>
        <begin position="338"/>
        <end position="367"/>
    </location>
</feature>
<feature type="repeat" description="ANK 4" evidence="12">
    <location>
        <begin position="371"/>
        <end position="405"/>
    </location>
</feature>
<feature type="zinc finger region" description="C2HC NPR-type" evidence="8">
    <location>
        <begin position="136"/>
        <end position="150"/>
    </location>
</feature>
<feature type="region of interest" description="Disordered" evidence="9">
    <location>
        <begin position="60"/>
        <end position="94"/>
    </location>
</feature>
<feature type="region of interest" description="Disordered" evidence="9">
    <location>
        <begin position="421"/>
        <end position="443"/>
    </location>
</feature>
<feature type="region of interest" description="Disordered" evidence="9">
    <location>
        <begin position="469"/>
        <end position="494"/>
    </location>
</feature>
<feature type="compositionally biased region" description="Pro residues" evidence="9">
    <location>
        <begin position="61"/>
        <end position="71"/>
    </location>
</feature>
<feature type="compositionally biased region" description="Gly residues" evidence="9">
    <location>
        <begin position="75"/>
        <end position="94"/>
    </location>
</feature>
<feature type="binding site" evidence="8">
    <location>
        <position position="139"/>
    </location>
    <ligand>
        <name>Zn(2+)</name>
        <dbReference type="ChEBI" id="CHEBI:29105"/>
    </ligand>
</feature>
<feature type="binding site" evidence="8">
    <location>
        <position position="144"/>
    </location>
    <ligand>
        <name>Zn(2+)</name>
        <dbReference type="ChEBI" id="CHEBI:29105"/>
    </ligand>
</feature>
<feature type="binding site" evidence="8">
    <location>
        <position position="146"/>
    </location>
    <ligand>
        <name>Zn(2+)</name>
        <dbReference type="ChEBI" id="CHEBI:29105"/>
    </ligand>
</feature>
<feature type="binding site" evidence="8">
    <location>
        <position position="149"/>
    </location>
    <ligand>
        <name>Zn(2+)</name>
        <dbReference type="ChEBI" id="CHEBI:29105"/>
    </ligand>
</feature>
<gene>
    <name evidence="12" type="primary">NH5.1</name>
    <name evidence="11" type="synonym">NH5</name>
    <name evidence="14" type="ordered locus">Os11g0141900</name>
    <name evidence="13" type="ordered locus">LOC_Os11g04600</name>
</gene>
<organism>
    <name type="scientific">Oryza sativa subsp. japonica</name>
    <name type="common">Rice</name>
    <dbReference type="NCBI Taxonomy" id="39947"/>
    <lineage>
        <taxon>Eukaryota</taxon>
        <taxon>Viridiplantae</taxon>
        <taxon>Streptophyta</taxon>
        <taxon>Embryophyta</taxon>
        <taxon>Tracheophyta</taxon>
        <taxon>Spermatophyta</taxon>
        <taxon>Magnoliopsida</taxon>
        <taxon>Liliopsida</taxon>
        <taxon>Poales</taxon>
        <taxon>Poaceae</taxon>
        <taxon>BOP clade</taxon>
        <taxon>Oryzoideae</taxon>
        <taxon>Oryzeae</taxon>
        <taxon>Oryzinae</taxon>
        <taxon>Oryza</taxon>
        <taxon>Oryza sativa</taxon>
    </lineage>
</organism>
<sequence>MSSEDSLKSLSLDYLSLLINGQAFSDVAFSVEGRLVHAHRCVLAARSLFFRKLFCGLDPNHQPPPPPPPLNWPMAGGGGGGSGGGGRGGAGGGGGAPATPELVIPVSSIRYEVLVLVLQFLYSGQASVAAPKSGPLPGCGARGCWHTRCGAAVDLALDTLAAARSFGVEQLALLVQKQLESMVKEASVDDVMKVLMASRKFEMQELWATCSHLVARSGLSADLLAKHLPIDVVAKIEEIRAKSPLAAVAAPRSPFLTHHYLPMNPASSAADRDNKIRRMRRALDAADIELVKLMVMGEGLDLDDALAVHYAVQHCNRDVVKALLELGAADVNSRAGPTGKTALHLAAEMVSPDMVSVLLDHHADPNSRTLDGVTPLDVLRSLTSEFLFKGAVPGLTHIEPNKLRLCLELVQSAVMVTTRDDGAPVTGGAEAGGSDGGNFPRSDADDSLVSLTMNSTLMYQGQEMAAAVAAGEGRKSNNGRGSPPPAMYFPNGFA</sequence>
<accession>Q2RAQ5</accession>
<evidence type="ECO:0000250" key="1">
    <source>
        <dbReference type="UniProtKB" id="O22286"/>
    </source>
</evidence>
<evidence type="ECO:0000250" key="2">
    <source>
        <dbReference type="UniProtKB" id="Q2HW56"/>
    </source>
</evidence>
<evidence type="ECO:0000250" key="3">
    <source>
        <dbReference type="UniProtKB" id="Q9FDY4"/>
    </source>
</evidence>
<evidence type="ECO:0000250" key="4">
    <source>
        <dbReference type="UniProtKB" id="Q9ZVC2"/>
    </source>
</evidence>
<evidence type="ECO:0000250" key="5">
    <source>
        <dbReference type="UniProtKB" id="S4VGD0"/>
    </source>
</evidence>
<evidence type="ECO:0000255" key="6"/>
<evidence type="ECO:0000255" key="7">
    <source>
        <dbReference type="PROSITE-ProRule" id="PRU00037"/>
    </source>
</evidence>
<evidence type="ECO:0000255" key="8">
    <source>
        <dbReference type="PROSITE-ProRule" id="PRU01391"/>
    </source>
</evidence>
<evidence type="ECO:0000256" key="9">
    <source>
        <dbReference type="SAM" id="MobiDB-lite"/>
    </source>
</evidence>
<evidence type="ECO:0000269" key="10">
    <source>
    </source>
</evidence>
<evidence type="ECO:0000303" key="11">
    <source>
    </source>
</evidence>
<evidence type="ECO:0000305" key="12"/>
<evidence type="ECO:0000312" key="13">
    <source>
        <dbReference type="EMBL" id="ABA91437.1"/>
    </source>
</evidence>
<evidence type="ECO:0000312" key="14">
    <source>
        <dbReference type="EMBL" id="BAF27562.1"/>
    </source>
</evidence>
<protein>
    <recommendedName>
        <fullName evidence="12">BTB/POZ domain and ankyrin repeat-containing protein NH5.1</fullName>
    </recommendedName>
</protein>
<proteinExistence type="evidence at protein level"/>
<keyword id="KW-0040">ANK repeat</keyword>
<keyword id="KW-0963">Cytoplasm</keyword>
<keyword id="KW-0479">Metal-binding</keyword>
<keyword id="KW-0539">Nucleus</keyword>
<keyword id="KW-1185">Reference proteome</keyword>
<keyword id="KW-0677">Repeat</keyword>
<keyword id="KW-0833">Ubl conjugation pathway</keyword>
<keyword id="KW-0862">Zinc</keyword>
<keyword id="KW-0863">Zinc-finger</keyword>
<dbReference type="EMBL" id="HM991172">
    <property type="protein sequence ID" value="AEF30415.1"/>
    <property type="molecule type" value="mRNA"/>
</dbReference>
<dbReference type="EMBL" id="DP000010">
    <property type="protein sequence ID" value="ABA91437.1"/>
    <property type="molecule type" value="Genomic_DNA"/>
</dbReference>
<dbReference type="EMBL" id="AP008217">
    <property type="protein sequence ID" value="BAF27562.1"/>
    <property type="molecule type" value="Genomic_DNA"/>
</dbReference>
<dbReference type="EMBL" id="AP014967">
    <property type="protein sequence ID" value="BAT12624.1"/>
    <property type="molecule type" value="Genomic_DNA"/>
</dbReference>
<dbReference type="RefSeq" id="XP_015616658.1">
    <property type="nucleotide sequence ID" value="XM_015761172.1"/>
</dbReference>
<dbReference type="SMR" id="Q2RAQ5"/>
<dbReference type="STRING" id="39947.Q2RAQ5"/>
<dbReference type="PaxDb" id="39947-Q2RAQ5"/>
<dbReference type="EnsemblPlants" id="Os11t0141900-01">
    <property type="protein sequence ID" value="Os11t0141900-01"/>
    <property type="gene ID" value="Os11g0141900"/>
</dbReference>
<dbReference type="Gramene" id="Os11t0141900-01">
    <property type="protein sequence ID" value="Os11t0141900-01"/>
    <property type="gene ID" value="Os11g0141900"/>
</dbReference>
<dbReference type="KEGG" id="dosa:Os11g0141900"/>
<dbReference type="eggNOG" id="KOG0504">
    <property type="taxonomic scope" value="Eukaryota"/>
</dbReference>
<dbReference type="HOGENOM" id="CLU_028148_0_0_1"/>
<dbReference type="InParanoid" id="Q2RAQ5"/>
<dbReference type="OMA" id="LNRGATN"/>
<dbReference type="OrthoDB" id="619508at2759"/>
<dbReference type="UniPathway" id="UPA00143"/>
<dbReference type="Proteomes" id="UP000000763">
    <property type="component" value="Chromosome 11"/>
</dbReference>
<dbReference type="Proteomes" id="UP000059680">
    <property type="component" value="Chromosome 11"/>
</dbReference>
<dbReference type="GO" id="GO:0005737">
    <property type="term" value="C:cytoplasm"/>
    <property type="evidence" value="ECO:0007669"/>
    <property type="project" value="UniProtKB-SubCell"/>
</dbReference>
<dbReference type="GO" id="GO:0005634">
    <property type="term" value="C:nucleus"/>
    <property type="evidence" value="ECO:0000318"/>
    <property type="project" value="GO_Central"/>
</dbReference>
<dbReference type="GO" id="GO:0000976">
    <property type="term" value="F:transcription cis-regulatory region binding"/>
    <property type="evidence" value="ECO:0000318"/>
    <property type="project" value="GO_Central"/>
</dbReference>
<dbReference type="GO" id="GO:0008270">
    <property type="term" value="F:zinc ion binding"/>
    <property type="evidence" value="ECO:0007669"/>
    <property type="project" value="UniProtKB-KW"/>
</dbReference>
<dbReference type="GO" id="GO:0009864">
    <property type="term" value="P:induced systemic resistance, jasmonic acid mediated signaling pathway"/>
    <property type="evidence" value="ECO:0000318"/>
    <property type="project" value="GO_Central"/>
</dbReference>
<dbReference type="GO" id="GO:0099402">
    <property type="term" value="P:plant organ development"/>
    <property type="evidence" value="ECO:0007669"/>
    <property type="project" value="InterPro"/>
</dbReference>
<dbReference type="GO" id="GO:0006355">
    <property type="term" value="P:regulation of DNA-templated transcription"/>
    <property type="evidence" value="ECO:0000318"/>
    <property type="project" value="GO_Central"/>
</dbReference>
<dbReference type="FunFam" id="1.25.40.20:FF:000647">
    <property type="entry name" value="BTB/POZ domain and ankyrin repeat-containing protein NH5.2"/>
    <property type="match status" value="1"/>
</dbReference>
<dbReference type="FunFam" id="3.30.710.10:FF:000132">
    <property type="entry name" value="BTB/POZ domain and ankyrin repeat-containing protein NH5.2"/>
    <property type="match status" value="1"/>
</dbReference>
<dbReference type="Gene3D" id="1.25.40.20">
    <property type="entry name" value="Ankyrin repeat-containing domain"/>
    <property type="match status" value="1"/>
</dbReference>
<dbReference type="Gene3D" id="3.30.710.10">
    <property type="entry name" value="Potassium Channel Kv1.1, Chain A"/>
    <property type="match status" value="1"/>
</dbReference>
<dbReference type="InterPro" id="IPR002110">
    <property type="entry name" value="Ankyrin_rpt"/>
</dbReference>
<dbReference type="InterPro" id="IPR036770">
    <property type="entry name" value="Ankyrin_rpt-contain_sf"/>
</dbReference>
<dbReference type="InterPro" id="IPR000210">
    <property type="entry name" value="BTB/POZ_dom"/>
</dbReference>
<dbReference type="InterPro" id="IPR044284">
    <property type="entry name" value="NPR5/6"/>
</dbReference>
<dbReference type="InterPro" id="IPR024228">
    <property type="entry name" value="NPR_central_dom"/>
</dbReference>
<dbReference type="InterPro" id="IPR011333">
    <property type="entry name" value="SKP1/BTB/POZ_sf"/>
</dbReference>
<dbReference type="PANTHER" id="PTHR46668">
    <property type="entry name" value="BTB/POZ DOMAIN AND ANKYRIN REPEAT-CONTAINING PROTEIN NH5.2"/>
    <property type="match status" value="1"/>
</dbReference>
<dbReference type="PANTHER" id="PTHR46668:SF2">
    <property type="entry name" value="BTB_POZ DOMAIN AND ANKYRIN REPEAT-CONTAINING PROTEIN NH5.1"/>
    <property type="match status" value="1"/>
</dbReference>
<dbReference type="Pfam" id="PF12796">
    <property type="entry name" value="Ank_2"/>
    <property type="match status" value="1"/>
</dbReference>
<dbReference type="Pfam" id="PF00651">
    <property type="entry name" value="BTB"/>
    <property type="match status" value="1"/>
</dbReference>
<dbReference type="Pfam" id="PF11900">
    <property type="entry name" value="DUF3420"/>
    <property type="match status" value="1"/>
</dbReference>
<dbReference type="SMART" id="SM00248">
    <property type="entry name" value="ANK"/>
    <property type="match status" value="2"/>
</dbReference>
<dbReference type="SMART" id="SM00225">
    <property type="entry name" value="BTB"/>
    <property type="match status" value="1"/>
</dbReference>
<dbReference type="SUPFAM" id="SSF48403">
    <property type="entry name" value="Ankyrin repeat"/>
    <property type="match status" value="1"/>
</dbReference>
<dbReference type="SUPFAM" id="SSF54695">
    <property type="entry name" value="POZ domain"/>
    <property type="match status" value="1"/>
</dbReference>
<dbReference type="PROSITE" id="PS50297">
    <property type="entry name" value="ANK_REP_REGION"/>
    <property type="match status" value="1"/>
</dbReference>
<dbReference type="PROSITE" id="PS50088">
    <property type="entry name" value="ANK_REPEAT"/>
    <property type="match status" value="1"/>
</dbReference>
<dbReference type="PROSITE" id="PS50097">
    <property type="entry name" value="BTB"/>
    <property type="match status" value="1"/>
</dbReference>
<dbReference type="PROSITE" id="PS52046">
    <property type="entry name" value="ZF_C2HC_NPR"/>
    <property type="match status" value="1"/>
</dbReference>